<comment type="function">
    <text evidence="1">Involved in unsaturated fatty acids biosynthesis. Catalyzes the dehydration of short chain beta-hydroxyacyl-ACPs and long chain saturated and unsaturated beta-hydroxyacyl-ACPs.</text>
</comment>
<comment type="catalytic activity">
    <reaction evidence="1">
        <text>a (3R)-hydroxyacyl-[ACP] = a (2E)-enoyl-[ACP] + H2O</text>
        <dbReference type="Rhea" id="RHEA:13097"/>
        <dbReference type="Rhea" id="RHEA-COMP:9925"/>
        <dbReference type="Rhea" id="RHEA-COMP:9945"/>
        <dbReference type="ChEBI" id="CHEBI:15377"/>
        <dbReference type="ChEBI" id="CHEBI:78784"/>
        <dbReference type="ChEBI" id="CHEBI:78827"/>
        <dbReference type="EC" id="4.2.1.59"/>
    </reaction>
</comment>
<comment type="subcellular location">
    <subcellularLocation>
        <location evidence="1">Cytoplasm</location>
    </subcellularLocation>
</comment>
<comment type="similarity">
    <text evidence="1">Belongs to the thioester dehydratase family. FabZ subfamily.</text>
</comment>
<keyword id="KW-0963">Cytoplasm</keyword>
<keyword id="KW-0441">Lipid A biosynthesis</keyword>
<keyword id="KW-0444">Lipid biosynthesis</keyword>
<keyword id="KW-0443">Lipid metabolism</keyword>
<keyword id="KW-0456">Lyase</keyword>
<evidence type="ECO:0000255" key="1">
    <source>
        <dbReference type="HAMAP-Rule" id="MF_00406"/>
    </source>
</evidence>
<reference key="1">
    <citation type="journal article" date="2002" name="Science">
        <title>50 million years of genomic stasis in endosymbiotic bacteria.</title>
        <authorList>
            <person name="Tamas I."/>
            <person name="Klasson L."/>
            <person name="Canbaeck B."/>
            <person name="Naeslund A.K."/>
            <person name="Eriksson A.-S."/>
            <person name="Wernegreen J.J."/>
            <person name="Sandstroem J.P."/>
            <person name="Moran N.A."/>
            <person name="Andersson S.G.E."/>
        </authorList>
    </citation>
    <scope>NUCLEOTIDE SEQUENCE [LARGE SCALE GENOMIC DNA]</scope>
    <source>
        <strain>Sg</strain>
    </source>
</reference>
<proteinExistence type="inferred from homology"/>
<organism>
    <name type="scientific">Buchnera aphidicola subsp. Schizaphis graminum (strain Sg)</name>
    <dbReference type="NCBI Taxonomy" id="198804"/>
    <lineage>
        <taxon>Bacteria</taxon>
        <taxon>Pseudomonadati</taxon>
        <taxon>Pseudomonadota</taxon>
        <taxon>Gammaproteobacteria</taxon>
        <taxon>Enterobacterales</taxon>
        <taxon>Erwiniaceae</taxon>
        <taxon>Buchnera</taxon>
    </lineage>
</organism>
<dbReference type="EC" id="4.2.1.59" evidence="1"/>
<dbReference type="EMBL" id="AE013218">
    <property type="protein sequence ID" value="AAM67791.1"/>
    <property type="molecule type" value="Genomic_DNA"/>
</dbReference>
<dbReference type="RefSeq" id="WP_011053758.1">
    <property type="nucleotide sequence ID" value="NC_004061.1"/>
</dbReference>
<dbReference type="SMR" id="Q8K9S4"/>
<dbReference type="STRING" id="198804.BUsg_232"/>
<dbReference type="GeneID" id="93003698"/>
<dbReference type="KEGG" id="bas:BUsg_232"/>
<dbReference type="eggNOG" id="COG0764">
    <property type="taxonomic scope" value="Bacteria"/>
</dbReference>
<dbReference type="HOGENOM" id="CLU_078912_1_0_6"/>
<dbReference type="Proteomes" id="UP000000416">
    <property type="component" value="Chromosome"/>
</dbReference>
<dbReference type="GO" id="GO:0005737">
    <property type="term" value="C:cytoplasm"/>
    <property type="evidence" value="ECO:0007669"/>
    <property type="project" value="UniProtKB-SubCell"/>
</dbReference>
<dbReference type="GO" id="GO:0016020">
    <property type="term" value="C:membrane"/>
    <property type="evidence" value="ECO:0007669"/>
    <property type="project" value="GOC"/>
</dbReference>
<dbReference type="GO" id="GO:0019171">
    <property type="term" value="F:(3R)-hydroxyacyl-[acyl-carrier-protein] dehydratase activity"/>
    <property type="evidence" value="ECO:0007669"/>
    <property type="project" value="UniProtKB-EC"/>
</dbReference>
<dbReference type="GO" id="GO:0006633">
    <property type="term" value="P:fatty acid biosynthetic process"/>
    <property type="evidence" value="ECO:0007669"/>
    <property type="project" value="UniProtKB-UniRule"/>
</dbReference>
<dbReference type="GO" id="GO:0009245">
    <property type="term" value="P:lipid A biosynthetic process"/>
    <property type="evidence" value="ECO:0007669"/>
    <property type="project" value="UniProtKB-UniRule"/>
</dbReference>
<dbReference type="CDD" id="cd01288">
    <property type="entry name" value="FabZ"/>
    <property type="match status" value="1"/>
</dbReference>
<dbReference type="FunFam" id="3.10.129.10:FF:000001">
    <property type="entry name" value="3-hydroxyacyl-[acyl-carrier-protein] dehydratase FabZ"/>
    <property type="match status" value="1"/>
</dbReference>
<dbReference type="Gene3D" id="3.10.129.10">
    <property type="entry name" value="Hotdog Thioesterase"/>
    <property type="match status" value="1"/>
</dbReference>
<dbReference type="HAMAP" id="MF_00406">
    <property type="entry name" value="FabZ"/>
    <property type="match status" value="1"/>
</dbReference>
<dbReference type="InterPro" id="IPR013114">
    <property type="entry name" value="FabA_FabZ"/>
</dbReference>
<dbReference type="InterPro" id="IPR010084">
    <property type="entry name" value="FabZ"/>
</dbReference>
<dbReference type="InterPro" id="IPR029069">
    <property type="entry name" value="HotDog_dom_sf"/>
</dbReference>
<dbReference type="NCBIfam" id="TIGR01750">
    <property type="entry name" value="fabZ"/>
    <property type="match status" value="1"/>
</dbReference>
<dbReference type="NCBIfam" id="NF000582">
    <property type="entry name" value="PRK00006.1"/>
    <property type="match status" value="1"/>
</dbReference>
<dbReference type="PANTHER" id="PTHR30272">
    <property type="entry name" value="3-HYDROXYACYL-[ACYL-CARRIER-PROTEIN] DEHYDRATASE"/>
    <property type="match status" value="1"/>
</dbReference>
<dbReference type="PANTHER" id="PTHR30272:SF1">
    <property type="entry name" value="3-HYDROXYACYL-[ACYL-CARRIER-PROTEIN] DEHYDRATASE"/>
    <property type="match status" value="1"/>
</dbReference>
<dbReference type="Pfam" id="PF07977">
    <property type="entry name" value="FabA"/>
    <property type="match status" value="1"/>
</dbReference>
<dbReference type="SUPFAM" id="SSF54637">
    <property type="entry name" value="Thioesterase/thiol ester dehydrase-isomerase"/>
    <property type="match status" value="1"/>
</dbReference>
<name>FABZ_BUCAP</name>
<protein>
    <recommendedName>
        <fullName evidence="1">3-hydroxyacyl-[acyl-carrier-protein] dehydratase FabZ</fullName>
        <ecNumber evidence="1">4.2.1.59</ecNumber>
    </recommendedName>
    <alternativeName>
        <fullName evidence="1">(3R)-hydroxymyristoyl-[acyl-carrier-protein] dehydratase</fullName>
        <shortName evidence="1">(3R)-hydroxymyristoyl-ACP dehydrase</shortName>
    </alternativeName>
    <alternativeName>
        <fullName evidence="1">Beta-hydroxyacyl-ACP dehydratase</fullName>
    </alternativeName>
</protein>
<feature type="chain" id="PRO_0000091653" description="3-hydroxyacyl-[acyl-carrier-protein] dehydratase FabZ">
    <location>
        <begin position="1"/>
        <end position="152"/>
    </location>
</feature>
<feature type="active site" evidence="1">
    <location>
        <position position="54"/>
    </location>
</feature>
<sequence>MNSDEYIFNIKDILNILPHRYPFLLIDRILDFKAFQYLKALKNCTVNEPFFQGHFIKEPVFPGVLMIEAMSQAAAVLIFKSIGKLNINQLYYFVGIENTRFKKIVVPGDQIFIEVIYLKSKKNFIKFKIFAIVNKKNVCKSTIIFYKKNIFN</sequence>
<gene>
    <name evidence="1" type="primary">fabZ</name>
    <name type="ordered locus">BUsg_232</name>
</gene>
<accession>Q8K9S4</accession>